<gene>
    <name evidence="1" type="primary">ftsB</name>
    <name type="ordered locus">ECH74115_3999</name>
</gene>
<organism>
    <name type="scientific">Escherichia coli O157:H7 (strain EC4115 / EHEC)</name>
    <dbReference type="NCBI Taxonomy" id="444450"/>
    <lineage>
        <taxon>Bacteria</taxon>
        <taxon>Pseudomonadati</taxon>
        <taxon>Pseudomonadota</taxon>
        <taxon>Gammaproteobacteria</taxon>
        <taxon>Enterobacterales</taxon>
        <taxon>Enterobacteriaceae</taxon>
        <taxon>Escherichia</taxon>
    </lineage>
</organism>
<accession>B5Z3B0</accession>
<keyword id="KW-0131">Cell cycle</keyword>
<keyword id="KW-0132">Cell division</keyword>
<keyword id="KW-0997">Cell inner membrane</keyword>
<keyword id="KW-1003">Cell membrane</keyword>
<keyword id="KW-0175">Coiled coil</keyword>
<keyword id="KW-0472">Membrane</keyword>
<keyword id="KW-0812">Transmembrane</keyword>
<keyword id="KW-1133">Transmembrane helix</keyword>
<evidence type="ECO:0000255" key="1">
    <source>
        <dbReference type="HAMAP-Rule" id="MF_00599"/>
    </source>
</evidence>
<dbReference type="EMBL" id="CP001164">
    <property type="protein sequence ID" value="ACI35824.1"/>
    <property type="molecule type" value="Genomic_DNA"/>
</dbReference>
<dbReference type="RefSeq" id="WP_000517476.1">
    <property type="nucleotide sequence ID" value="NC_011353.1"/>
</dbReference>
<dbReference type="SMR" id="B5Z3B0"/>
<dbReference type="GeneID" id="93779258"/>
<dbReference type="KEGG" id="ecf:ECH74115_3999"/>
<dbReference type="HOGENOM" id="CLU_134863_5_2_6"/>
<dbReference type="GO" id="GO:0032153">
    <property type="term" value="C:cell division site"/>
    <property type="evidence" value="ECO:0007669"/>
    <property type="project" value="UniProtKB-UniRule"/>
</dbReference>
<dbReference type="GO" id="GO:0030428">
    <property type="term" value="C:cell septum"/>
    <property type="evidence" value="ECO:0007669"/>
    <property type="project" value="TreeGrafter"/>
</dbReference>
<dbReference type="GO" id="GO:0005886">
    <property type="term" value="C:plasma membrane"/>
    <property type="evidence" value="ECO:0007669"/>
    <property type="project" value="UniProtKB-SubCell"/>
</dbReference>
<dbReference type="GO" id="GO:0043093">
    <property type="term" value="P:FtsZ-dependent cytokinesis"/>
    <property type="evidence" value="ECO:0007669"/>
    <property type="project" value="UniProtKB-UniRule"/>
</dbReference>
<dbReference type="FunFam" id="1.20.5.400:FF:000001">
    <property type="entry name" value="Cell division protein FtsB"/>
    <property type="match status" value="1"/>
</dbReference>
<dbReference type="Gene3D" id="1.20.5.400">
    <property type="match status" value="1"/>
</dbReference>
<dbReference type="HAMAP" id="MF_00599">
    <property type="entry name" value="FtsB"/>
    <property type="match status" value="1"/>
</dbReference>
<dbReference type="InterPro" id="IPR023081">
    <property type="entry name" value="Cell_div_FtsB"/>
</dbReference>
<dbReference type="InterPro" id="IPR007060">
    <property type="entry name" value="FtsL/DivIC"/>
</dbReference>
<dbReference type="NCBIfam" id="NF002058">
    <property type="entry name" value="PRK00888.1"/>
    <property type="match status" value="1"/>
</dbReference>
<dbReference type="PANTHER" id="PTHR37485">
    <property type="entry name" value="CELL DIVISION PROTEIN FTSB"/>
    <property type="match status" value="1"/>
</dbReference>
<dbReference type="PANTHER" id="PTHR37485:SF1">
    <property type="entry name" value="CELL DIVISION PROTEIN FTSB"/>
    <property type="match status" value="1"/>
</dbReference>
<dbReference type="Pfam" id="PF04977">
    <property type="entry name" value="DivIC"/>
    <property type="match status" value="1"/>
</dbReference>
<reference key="1">
    <citation type="journal article" date="2011" name="Proc. Natl. Acad. Sci. U.S.A.">
        <title>Genomic anatomy of Escherichia coli O157:H7 outbreaks.</title>
        <authorList>
            <person name="Eppinger M."/>
            <person name="Mammel M.K."/>
            <person name="Leclerc J.E."/>
            <person name="Ravel J."/>
            <person name="Cebula T.A."/>
        </authorList>
    </citation>
    <scope>NUCLEOTIDE SEQUENCE [LARGE SCALE GENOMIC DNA]</scope>
    <source>
        <strain>EC4115 / EHEC</strain>
    </source>
</reference>
<feature type="chain" id="PRO_1000129923" description="Cell division protein FtsB">
    <location>
        <begin position="1"/>
        <end position="103"/>
    </location>
</feature>
<feature type="topological domain" description="Cytoplasmic" evidence="1">
    <location>
        <begin position="1"/>
        <end position="3"/>
    </location>
</feature>
<feature type="transmembrane region" description="Helical" evidence="1">
    <location>
        <begin position="4"/>
        <end position="21"/>
    </location>
</feature>
<feature type="topological domain" description="Periplasmic" evidence="1">
    <location>
        <begin position="22"/>
        <end position="103"/>
    </location>
</feature>
<feature type="coiled-coil region" evidence="1">
    <location>
        <begin position="31"/>
        <end position="71"/>
    </location>
</feature>
<sequence>MGKLTLLLLAILVWLQYSLWFGKNGIHDYTRVNDDVAAQQATNAKLKARNDQLFAEIDDLNGGQEALEERARNELSMTRPGETFYRLVPDASKRAQSAGQNNR</sequence>
<proteinExistence type="inferred from homology"/>
<comment type="function">
    <text evidence="1">Essential cell division protein. May link together the upstream cell division proteins, which are predominantly cytoplasmic, with the downstream cell division proteins, which are predominantly periplasmic.</text>
</comment>
<comment type="subunit">
    <text evidence="1">Part of a complex composed of FtsB, FtsL and FtsQ.</text>
</comment>
<comment type="subcellular location">
    <subcellularLocation>
        <location evidence="1">Cell inner membrane</location>
        <topology evidence="1">Single-pass type II membrane protein</topology>
    </subcellularLocation>
    <text evidence="1">Localizes to the division septum.</text>
</comment>
<comment type="similarity">
    <text evidence="1">Belongs to the FtsB family.</text>
</comment>
<name>FTSB_ECO5E</name>
<protein>
    <recommendedName>
        <fullName evidence="1">Cell division protein FtsB</fullName>
    </recommendedName>
</protein>